<feature type="chain" id="PRO_0000344376" description="Integrator complex subunit 4 homolog">
    <location>
        <begin position="1"/>
        <end position="1233"/>
    </location>
</feature>
<feature type="repeat" description="HEAT 1">
    <location>
        <begin position="236"/>
        <end position="273"/>
    </location>
</feature>
<feature type="repeat" description="HEAT 2">
    <location>
        <begin position="275"/>
        <end position="310"/>
    </location>
</feature>
<feature type="repeat" description="HEAT 3">
    <location>
        <begin position="487"/>
        <end position="524"/>
    </location>
</feature>
<feature type="repeat" description="HEAT 4">
    <location>
        <begin position="525"/>
        <end position="561"/>
    </location>
</feature>
<feature type="repeat" description="HEAT 5">
    <location>
        <begin position="563"/>
        <end position="597"/>
    </location>
</feature>
<feature type="region of interest" description="Disordered" evidence="2">
    <location>
        <begin position="426"/>
        <end position="473"/>
    </location>
</feature>
<feature type="region of interest" description="Disordered" evidence="2">
    <location>
        <begin position="767"/>
        <end position="796"/>
    </location>
</feature>
<feature type="region of interest" description="Disordered" evidence="2">
    <location>
        <begin position="993"/>
        <end position="1057"/>
    </location>
</feature>
<feature type="compositionally biased region" description="Low complexity" evidence="2">
    <location>
        <begin position="428"/>
        <end position="462"/>
    </location>
</feature>
<feature type="compositionally biased region" description="Low complexity" evidence="2">
    <location>
        <begin position="767"/>
        <end position="792"/>
    </location>
</feature>
<feature type="compositionally biased region" description="Acidic residues" evidence="2">
    <location>
        <begin position="1000"/>
        <end position="1013"/>
    </location>
</feature>
<feature type="compositionally biased region" description="Basic and acidic residues" evidence="2">
    <location>
        <begin position="1014"/>
        <end position="1030"/>
    </location>
</feature>
<feature type="compositionally biased region" description="Low complexity" evidence="2">
    <location>
        <begin position="1046"/>
        <end position="1057"/>
    </location>
</feature>
<evidence type="ECO:0000250" key="1">
    <source>
        <dbReference type="UniProtKB" id="Q96HW7"/>
    </source>
</evidence>
<evidence type="ECO:0000256" key="2">
    <source>
        <dbReference type="SAM" id="MobiDB-lite"/>
    </source>
</evidence>
<evidence type="ECO:0000305" key="3"/>
<comment type="function">
    <text evidence="1">Component of the integrator complex, a multiprotein complex that terminates RNA polymerase II (Pol II) transcription in the promoter-proximal region of genes. The integrator complex provides a quality checkpoint during transcription elongation by driving premature transcription termination of transcripts that are unfavorably configured for transcriptional elongation: the complex terminates transcription by (1) catalyzing dephosphorylation of the C-terminal domain (CTD) of Pol II subunit polr2a, (2) degrading the exiting nascent RNA transcript via endonuclease activity and (3) promoting the release of Pol II from bound DNA. The integrator complex is also involved in terminating the synthesis of non-coding Pol II transcripts, such as enhancer RNAs (eRNAs), small nuclear RNAs (snRNAs), telomerase RNAs and long non-coding RNAs (lncRNAs).</text>
</comment>
<comment type="subunit">
    <text evidence="1">Component of the Integrator complex. The core complex associates with protein phosphatase 2A subunits, to form the Integrator-PP2A (INTAC) complex.</text>
</comment>
<comment type="subcellular location">
    <subcellularLocation>
        <location evidence="1">Nucleus</location>
    </subcellularLocation>
    <subcellularLocation>
        <location evidence="1">Cytoplasm</location>
    </subcellularLocation>
</comment>
<comment type="similarity">
    <text evidence="3">Belongs to the Integrator subunit 4 family.</text>
</comment>
<keyword id="KW-0963">Cytoplasm</keyword>
<keyword id="KW-0539">Nucleus</keyword>
<keyword id="KW-1185">Reference proteome</keyword>
<keyword id="KW-0677">Repeat</keyword>
<name>INT4_DICDI</name>
<protein>
    <recommendedName>
        <fullName>Integrator complex subunit 4 homolog</fullName>
    </recommendedName>
</protein>
<organism>
    <name type="scientific">Dictyostelium discoideum</name>
    <name type="common">Social amoeba</name>
    <dbReference type="NCBI Taxonomy" id="44689"/>
    <lineage>
        <taxon>Eukaryota</taxon>
        <taxon>Amoebozoa</taxon>
        <taxon>Evosea</taxon>
        <taxon>Eumycetozoa</taxon>
        <taxon>Dictyostelia</taxon>
        <taxon>Dictyosteliales</taxon>
        <taxon>Dictyosteliaceae</taxon>
        <taxon>Dictyostelium</taxon>
    </lineage>
</organism>
<accession>Q54LH5</accession>
<proteinExistence type="inferred from homology"/>
<reference key="1">
    <citation type="journal article" date="2005" name="Nature">
        <title>The genome of the social amoeba Dictyostelium discoideum.</title>
        <authorList>
            <person name="Eichinger L."/>
            <person name="Pachebat J.A."/>
            <person name="Gloeckner G."/>
            <person name="Rajandream M.A."/>
            <person name="Sucgang R."/>
            <person name="Berriman M."/>
            <person name="Song J."/>
            <person name="Olsen R."/>
            <person name="Szafranski K."/>
            <person name="Xu Q."/>
            <person name="Tunggal B."/>
            <person name="Kummerfeld S."/>
            <person name="Madera M."/>
            <person name="Konfortov B.A."/>
            <person name="Rivero F."/>
            <person name="Bankier A.T."/>
            <person name="Lehmann R."/>
            <person name="Hamlin N."/>
            <person name="Davies R."/>
            <person name="Gaudet P."/>
            <person name="Fey P."/>
            <person name="Pilcher K."/>
            <person name="Chen G."/>
            <person name="Saunders D."/>
            <person name="Sodergren E.J."/>
            <person name="Davis P."/>
            <person name="Kerhornou A."/>
            <person name="Nie X."/>
            <person name="Hall N."/>
            <person name="Anjard C."/>
            <person name="Hemphill L."/>
            <person name="Bason N."/>
            <person name="Farbrother P."/>
            <person name="Desany B."/>
            <person name="Just E."/>
            <person name="Morio T."/>
            <person name="Rost R."/>
            <person name="Churcher C.M."/>
            <person name="Cooper J."/>
            <person name="Haydock S."/>
            <person name="van Driessche N."/>
            <person name="Cronin A."/>
            <person name="Goodhead I."/>
            <person name="Muzny D.M."/>
            <person name="Mourier T."/>
            <person name="Pain A."/>
            <person name="Lu M."/>
            <person name="Harper D."/>
            <person name="Lindsay R."/>
            <person name="Hauser H."/>
            <person name="James K.D."/>
            <person name="Quiles M."/>
            <person name="Madan Babu M."/>
            <person name="Saito T."/>
            <person name="Buchrieser C."/>
            <person name="Wardroper A."/>
            <person name="Felder M."/>
            <person name="Thangavelu M."/>
            <person name="Johnson D."/>
            <person name="Knights A."/>
            <person name="Loulseged H."/>
            <person name="Mungall K.L."/>
            <person name="Oliver K."/>
            <person name="Price C."/>
            <person name="Quail M.A."/>
            <person name="Urushihara H."/>
            <person name="Hernandez J."/>
            <person name="Rabbinowitsch E."/>
            <person name="Steffen D."/>
            <person name="Sanders M."/>
            <person name="Ma J."/>
            <person name="Kohara Y."/>
            <person name="Sharp S."/>
            <person name="Simmonds M.N."/>
            <person name="Spiegler S."/>
            <person name="Tivey A."/>
            <person name="Sugano S."/>
            <person name="White B."/>
            <person name="Walker D."/>
            <person name="Woodward J.R."/>
            <person name="Winckler T."/>
            <person name="Tanaka Y."/>
            <person name="Shaulsky G."/>
            <person name="Schleicher M."/>
            <person name="Weinstock G.M."/>
            <person name="Rosenthal A."/>
            <person name="Cox E.C."/>
            <person name="Chisholm R.L."/>
            <person name="Gibbs R.A."/>
            <person name="Loomis W.F."/>
            <person name="Platzer M."/>
            <person name="Kay R.R."/>
            <person name="Williams J.G."/>
            <person name="Dear P.H."/>
            <person name="Noegel A.A."/>
            <person name="Barrell B.G."/>
            <person name="Kuspa A."/>
        </authorList>
    </citation>
    <scope>NUCLEOTIDE SEQUENCE [LARGE SCALE GENOMIC DNA]</scope>
    <source>
        <strain>AX4</strain>
    </source>
</reference>
<dbReference type="EMBL" id="AAFI02000089">
    <property type="protein sequence ID" value="EAL64072.1"/>
    <property type="molecule type" value="Genomic_DNA"/>
</dbReference>
<dbReference type="RefSeq" id="XP_637586.1">
    <property type="nucleotide sequence ID" value="XM_632494.1"/>
</dbReference>
<dbReference type="SMR" id="Q54LH5"/>
<dbReference type="FunCoup" id="Q54LH5">
    <property type="interactions" value="76"/>
</dbReference>
<dbReference type="STRING" id="44689.Q54LH5"/>
<dbReference type="PaxDb" id="44689-DDB0234080"/>
<dbReference type="EnsemblProtists" id="EAL64072">
    <property type="protein sequence ID" value="EAL64072"/>
    <property type="gene ID" value="DDB_G0286633"/>
</dbReference>
<dbReference type="GeneID" id="8625726"/>
<dbReference type="KEGG" id="ddi:DDB_G0286633"/>
<dbReference type="dictyBase" id="DDB_G0286633">
    <property type="gene designation" value="ints4"/>
</dbReference>
<dbReference type="VEuPathDB" id="AmoebaDB:DDB_G0286633"/>
<dbReference type="eggNOG" id="KOG2259">
    <property type="taxonomic scope" value="Eukaryota"/>
</dbReference>
<dbReference type="HOGENOM" id="CLU_267504_0_0_1"/>
<dbReference type="InParanoid" id="Q54LH5"/>
<dbReference type="OMA" id="CIKLIWI"/>
<dbReference type="Reactome" id="R-DDI-6807505">
    <property type="pathway name" value="RNA polymerase II transcribes snRNA genes"/>
</dbReference>
<dbReference type="PRO" id="PR:Q54LH5"/>
<dbReference type="Proteomes" id="UP000002195">
    <property type="component" value="Chromosome 4"/>
</dbReference>
<dbReference type="GO" id="GO:0005737">
    <property type="term" value="C:cytoplasm"/>
    <property type="evidence" value="ECO:0000250"/>
    <property type="project" value="UniProtKB"/>
</dbReference>
<dbReference type="GO" id="GO:0160232">
    <property type="term" value="C:INTAC complex"/>
    <property type="evidence" value="ECO:0000250"/>
    <property type="project" value="UniProtKB"/>
</dbReference>
<dbReference type="GO" id="GO:0032039">
    <property type="term" value="C:integrator complex"/>
    <property type="evidence" value="ECO:0000250"/>
    <property type="project" value="UniProtKB"/>
</dbReference>
<dbReference type="GO" id="GO:0005634">
    <property type="term" value="C:nucleus"/>
    <property type="evidence" value="ECO:0000250"/>
    <property type="project" value="UniProtKB"/>
</dbReference>
<dbReference type="GO" id="GO:0030674">
    <property type="term" value="F:protein-macromolecule adaptor activity"/>
    <property type="evidence" value="ECO:0000250"/>
    <property type="project" value="UniProtKB"/>
</dbReference>
<dbReference type="GO" id="GO:0160240">
    <property type="term" value="P:RNA polymerase II transcription initiation surveillance"/>
    <property type="evidence" value="ECO:0000250"/>
    <property type="project" value="UniProtKB"/>
</dbReference>
<dbReference type="GO" id="GO:0016180">
    <property type="term" value="P:snRNA processing"/>
    <property type="evidence" value="ECO:0000318"/>
    <property type="project" value="GO_Central"/>
</dbReference>
<dbReference type="FunFam" id="1.25.10.10:FF:001870">
    <property type="entry name" value="Integrator complex subunit 4 homolog"/>
    <property type="match status" value="1"/>
</dbReference>
<dbReference type="Gene3D" id="1.25.10.10">
    <property type="entry name" value="Leucine-rich Repeat Variant"/>
    <property type="match status" value="2"/>
</dbReference>
<dbReference type="InterPro" id="IPR011989">
    <property type="entry name" value="ARM-like"/>
</dbReference>
<dbReference type="InterPro" id="IPR016024">
    <property type="entry name" value="ARM-type_fold"/>
</dbReference>
<dbReference type="PANTHER" id="PTHR20938">
    <property type="entry name" value="INTEGRATOR COMPLEX SUBUNIT 4"/>
    <property type="match status" value="1"/>
</dbReference>
<dbReference type="PANTHER" id="PTHR20938:SF0">
    <property type="entry name" value="INTEGRATOR COMPLEX SUBUNIT 4"/>
    <property type="match status" value="1"/>
</dbReference>
<dbReference type="Pfam" id="PF25458">
    <property type="entry name" value="INTS4_C"/>
    <property type="match status" value="1"/>
</dbReference>
<dbReference type="SUPFAM" id="SSF48371">
    <property type="entry name" value="ARM repeat"/>
    <property type="match status" value="1"/>
</dbReference>
<dbReference type="SUPFAM" id="SSF81995">
    <property type="entry name" value="beta-sandwich domain of Sec23/24"/>
    <property type="match status" value="1"/>
</dbReference>
<gene>
    <name type="primary">ints4</name>
    <name type="ORF">DDB_G0286633</name>
</gene>
<sequence>MNKKSHQQQVLQQQQQQQQQQFQQQHFQQQQQQQQFQQQQQQQQQLQQQQLQQQQQQQIQQQQQIQQQQQQQQQQQQQIQQQQQPQQIQQPQQQLPNFSVPIINQSIISNIKLYSTFETLLLSLSSTDTREQTKAIIYLSSLTINNKSNGIDLVYCIQKQLVVEAHNHIKVLLINLLGDISLDPFIDSFHILNKLLYLIRNEKSKKVLSSCLININKISKSLTFSKGNDVNSSSSSLINQIIEYIEPLLHSTSPLVRRETIVLLGSIVKNLDKESEEIQILLLNYLKDTDFRVREASLKSLSVIFQRGASLSVNKLYQSIILLLLDSFEQVRLECIKLIWIFGNIYPNHIVVSGGTKIRLVDDVFKKICNAVNDSSVIVRNCACKLLGCTYDVSLNYLIQTLSKEVMVWGKGKQYQIGHSSITKQRLQQKQQQQQQQQQQQQQQPPQQQPSQQPNQQPNQQQTNVSGTHIATPEGDFDVVGSDSLNILESGVIGAFIQGLEDEFYEVRSSAIDSMCELSVRNDEFAQKNIDFLVDIFNDEIESVRINSINSLRKIGNNVVIKEEQLHIILANLESSSKEERQSLHRLLTSIHLSNYSCLHATTQALLMNLSRYPYDIHSIFETLKIIGQTNPFTEFIVDDLLRIDPKFASVEPNMDDIFYVAVMVLVLNSCIKNRNILSLLPSFSFQHHLYFKDKYPKYFPQNLQKDSNIILAPTLKYSSVVNNNNNKNNNNNTTTTSIINDNGEINQFLNLTLSLLYGDNNNIINNNNTNNNNNNNNNNNNNNNNNNNNNNDENDENLNYGFQRLFLNQKKEIQLNKLFQECKRNFKRISSICLSLKPTSDFYNKYLKILTTIVSSSRRFKTITTSNQLNHLLYKLNHKFIGVDNNCKLILMEIGIYSFIIEILSTITLSTSSPPTTTTTTSSTSLFTSINSTPIELSNDQINQLTKKLNEYFKFSNDFKLEISTSIKSLLDLFNIKNNNINNNNNIINKKDKKLKENEENEENEENENNENENEKENGKNKEKEKNENDNENENENERPSKIQKTTSELIKTTTTTSTSTSTLIHYNLIEWTDNYIPPILKISNLIKKKSVDVILPIPNDKPIEFLDIFPLKLMINAKIENIRNLDSLFIQSTWQSIHTGQLNSQIHIIPKSAFTPTKPLSYNISCSIYLSLQNIRHNRLSSKESIPLRISIVEQFLNNNNNNNVTIIPLSKFVIFNILPVDNVNLLPNLI</sequence>